<keyword id="KW-0328">Glycosyltransferase</keyword>
<keyword id="KW-0479">Metal-binding</keyword>
<keyword id="KW-0671">Queuosine biosynthesis</keyword>
<keyword id="KW-1185">Reference proteome</keyword>
<keyword id="KW-0808">Transferase</keyword>
<keyword id="KW-0819">tRNA processing</keyword>
<keyword id="KW-0862">Zinc</keyword>
<evidence type="ECO:0000255" key="1">
    <source>
        <dbReference type="HAMAP-Rule" id="MF_00168"/>
    </source>
</evidence>
<dbReference type="EC" id="2.4.2.29" evidence="1"/>
<dbReference type="EMBL" id="CP000612">
    <property type="protein sequence ID" value="ABO50194.1"/>
    <property type="molecule type" value="Genomic_DNA"/>
</dbReference>
<dbReference type="RefSeq" id="WP_011878009.1">
    <property type="nucleotide sequence ID" value="NC_009253.1"/>
</dbReference>
<dbReference type="SMR" id="A4J541"/>
<dbReference type="STRING" id="349161.Dred_1666"/>
<dbReference type="KEGG" id="drm:Dred_1666"/>
<dbReference type="eggNOG" id="COG0343">
    <property type="taxonomic scope" value="Bacteria"/>
</dbReference>
<dbReference type="HOGENOM" id="CLU_022060_0_1_9"/>
<dbReference type="OrthoDB" id="9805417at2"/>
<dbReference type="UniPathway" id="UPA00392"/>
<dbReference type="Proteomes" id="UP000001556">
    <property type="component" value="Chromosome"/>
</dbReference>
<dbReference type="GO" id="GO:0005829">
    <property type="term" value="C:cytosol"/>
    <property type="evidence" value="ECO:0007669"/>
    <property type="project" value="TreeGrafter"/>
</dbReference>
<dbReference type="GO" id="GO:0046872">
    <property type="term" value="F:metal ion binding"/>
    <property type="evidence" value="ECO:0007669"/>
    <property type="project" value="UniProtKB-KW"/>
</dbReference>
<dbReference type="GO" id="GO:0008479">
    <property type="term" value="F:tRNA-guanosine(34) queuine transglycosylase activity"/>
    <property type="evidence" value="ECO:0007669"/>
    <property type="project" value="UniProtKB-UniRule"/>
</dbReference>
<dbReference type="GO" id="GO:0008616">
    <property type="term" value="P:queuosine biosynthetic process"/>
    <property type="evidence" value="ECO:0007669"/>
    <property type="project" value="UniProtKB-UniRule"/>
</dbReference>
<dbReference type="GO" id="GO:0002099">
    <property type="term" value="P:tRNA wobble guanine modification"/>
    <property type="evidence" value="ECO:0007669"/>
    <property type="project" value="TreeGrafter"/>
</dbReference>
<dbReference type="GO" id="GO:0101030">
    <property type="term" value="P:tRNA-guanine transglycosylation"/>
    <property type="evidence" value="ECO:0007669"/>
    <property type="project" value="InterPro"/>
</dbReference>
<dbReference type="FunFam" id="3.20.20.105:FF:000001">
    <property type="entry name" value="Queuine tRNA-ribosyltransferase"/>
    <property type="match status" value="1"/>
</dbReference>
<dbReference type="Gene3D" id="3.20.20.105">
    <property type="entry name" value="Queuine tRNA-ribosyltransferase-like"/>
    <property type="match status" value="1"/>
</dbReference>
<dbReference type="HAMAP" id="MF_00168">
    <property type="entry name" value="Q_tRNA_Tgt"/>
    <property type="match status" value="1"/>
</dbReference>
<dbReference type="InterPro" id="IPR050076">
    <property type="entry name" value="ArchSynthase1/Queuine_TRR"/>
</dbReference>
<dbReference type="InterPro" id="IPR004803">
    <property type="entry name" value="TGT"/>
</dbReference>
<dbReference type="InterPro" id="IPR036511">
    <property type="entry name" value="TGT-like_sf"/>
</dbReference>
<dbReference type="InterPro" id="IPR002616">
    <property type="entry name" value="tRNA_ribo_trans-like"/>
</dbReference>
<dbReference type="NCBIfam" id="TIGR00430">
    <property type="entry name" value="Q_tRNA_tgt"/>
    <property type="match status" value="1"/>
</dbReference>
<dbReference type="NCBIfam" id="TIGR00449">
    <property type="entry name" value="tgt_general"/>
    <property type="match status" value="1"/>
</dbReference>
<dbReference type="PANTHER" id="PTHR46499">
    <property type="entry name" value="QUEUINE TRNA-RIBOSYLTRANSFERASE"/>
    <property type="match status" value="1"/>
</dbReference>
<dbReference type="PANTHER" id="PTHR46499:SF1">
    <property type="entry name" value="QUEUINE TRNA-RIBOSYLTRANSFERASE"/>
    <property type="match status" value="1"/>
</dbReference>
<dbReference type="Pfam" id="PF01702">
    <property type="entry name" value="TGT"/>
    <property type="match status" value="1"/>
</dbReference>
<dbReference type="SUPFAM" id="SSF51713">
    <property type="entry name" value="tRNA-guanine transglycosylase"/>
    <property type="match status" value="1"/>
</dbReference>
<feature type="chain" id="PRO_1000071574" description="Queuine tRNA-ribosyltransferase">
    <location>
        <begin position="1"/>
        <end position="370"/>
    </location>
</feature>
<feature type="region of interest" description="RNA binding" evidence="1">
    <location>
        <begin position="247"/>
        <end position="253"/>
    </location>
</feature>
<feature type="region of interest" description="RNA binding; important for wobble base 34 recognition" evidence="1">
    <location>
        <begin position="271"/>
        <end position="275"/>
    </location>
</feature>
<feature type="active site" description="Proton acceptor" evidence="1">
    <location>
        <position position="93"/>
    </location>
</feature>
<feature type="active site" description="Nucleophile" evidence="1">
    <location>
        <position position="266"/>
    </location>
</feature>
<feature type="binding site" evidence="1">
    <location>
        <begin position="93"/>
        <end position="97"/>
    </location>
    <ligand>
        <name>substrate</name>
    </ligand>
</feature>
<feature type="binding site" evidence="1">
    <location>
        <position position="147"/>
    </location>
    <ligand>
        <name>substrate</name>
    </ligand>
</feature>
<feature type="binding site" evidence="1">
    <location>
        <position position="189"/>
    </location>
    <ligand>
        <name>substrate</name>
    </ligand>
</feature>
<feature type="binding site" evidence="1">
    <location>
        <position position="216"/>
    </location>
    <ligand>
        <name>substrate</name>
    </ligand>
</feature>
<feature type="binding site" evidence="1">
    <location>
        <position position="304"/>
    </location>
    <ligand>
        <name>Zn(2+)</name>
        <dbReference type="ChEBI" id="CHEBI:29105"/>
    </ligand>
</feature>
<feature type="binding site" evidence="1">
    <location>
        <position position="306"/>
    </location>
    <ligand>
        <name>Zn(2+)</name>
        <dbReference type="ChEBI" id="CHEBI:29105"/>
    </ligand>
</feature>
<feature type="binding site" evidence="1">
    <location>
        <position position="309"/>
    </location>
    <ligand>
        <name>Zn(2+)</name>
        <dbReference type="ChEBI" id="CHEBI:29105"/>
    </ligand>
</feature>
<feature type="binding site" evidence="1">
    <location>
        <position position="335"/>
    </location>
    <ligand>
        <name>Zn(2+)</name>
        <dbReference type="ChEBI" id="CHEBI:29105"/>
    </ligand>
</feature>
<protein>
    <recommendedName>
        <fullName evidence="1">Queuine tRNA-ribosyltransferase</fullName>
        <ecNumber evidence="1">2.4.2.29</ecNumber>
    </recommendedName>
    <alternativeName>
        <fullName evidence="1">Guanine insertion enzyme</fullName>
    </alternativeName>
    <alternativeName>
        <fullName evidence="1">tRNA-guanine transglycosylase</fullName>
    </alternativeName>
</protein>
<accession>A4J541</accession>
<gene>
    <name evidence="1" type="primary">tgt</name>
    <name type="ordered locus">Dred_1666</name>
</gene>
<sequence length="370" mass="42118">MPVKIKIEKKEKHTRARLGKLTTPHGEVETPIFMPVGTQATVKTMTPEEVKETGGRLVLSNTYHLYLRPGHDLVKEAGGLHKFMNWDGPILTDSGGFQVFSLGPLRTITEEGVEFRSHIDGSKHFFTPEKVMEIEQALGADIAMAFDECAPYPCEKEYAVAALERTTRWAERCKRVHKREDQALFGIIQGGVFPDLRERSAKELLAMDFPGYGIGGLSVGEPKELMYEVLDQLMPIMPEDKPRYLMGVGSPDCLIEGVVRGVDMFDCVLPTRIARNGTVFTHNGKLTVRNAEYARDFRPMDQQCDCYACRNYSRAYIRHLIKTDEILGIRLTTIHNLHFIQHLMQNIRQAIREDRLLEYREDFLKVFNAG</sequence>
<comment type="function">
    <text evidence="1">Catalyzes the base-exchange of a guanine (G) residue with the queuine precursor 7-aminomethyl-7-deazaguanine (PreQ1) at position 34 (anticodon wobble position) in tRNAs with GU(N) anticodons (tRNA-Asp, -Asn, -His and -Tyr). Catalysis occurs through a double-displacement mechanism. The nucleophile active site attacks the C1' of nucleotide 34 to detach the guanine base from the RNA, forming a covalent enzyme-RNA intermediate. The proton acceptor active site deprotonates the incoming PreQ1, allowing a nucleophilic attack on the C1' of the ribose to form the product. After dissociation, two additional enzymatic reactions on the tRNA convert PreQ1 to queuine (Q), resulting in the hypermodified nucleoside queuosine (7-(((4,5-cis-dihydroxy-2-cyclopenten-1-yl)amino)methyl)-7-deazaguanosine).</text>
</comment>
<comment type="catalytic activity">
    <reaction evidence="1">
        <text>7-aminomethyl-7-carbaguanine + guanosine(34) in tRNA = 7-aminomethyl-7-carbaguanosine(34) in tRNA + guanine</text>
        <dbReference type="Rhea" id="RHEA:24104"/>
        <dbReference type="Rhea" id="RHEA-COMP:10341"/>
        <dbReference type="Rhea" id="RHEA-COMP:10342"/>
        <dbReference type="ChEBI" id="CHEBI:16235"/>
        <dbReference type="ChEBI" id="CHEBI:58703"/>
        <dbReference type="ChEBI" id="CHEBI:74269"/>
        <dbReference type="ChEBI" id="CHEBI:82833"/>
        <dbReference type="EC" id="2.4.2.29"/>
    </reaction>
</comment>
<comment type="cofactor">
    <cofactor evidence="1">
        <name>Zn(2+)</name>
        <dbReference type="ChEBI" id="CHEBI:29105"/>
    </cofactor>
    <text evidence="1">Binds 1 zinc ion per subunit.</text>
</comment>
<comment type="pathway">
    <text evidence="1">tRNA modification; tRNA-queuosine biosynthesis.</text>
</comment>
<comment type="subunit">
    <text evidence="1">Homodimer. Within each dimer, one monomer is responsible for RNA recognition and catalysis, while the other monomer binds to the replacement base PreQ1.</text>
</comment>
<comment type="similarity">
    <text evidence="1">Belongs to the queuine tRNA-ribosyltransferase family.</text>
</comment>
<name>TGT_DESRM</name>
<organism>
    <name type="scientific">Desulforamulus reducens (strain ATCC BAA-1160 / DSM 100696 / MI-1)</name>
    <name type="common">Desulfotomaculum reducens</name>
    <dbReference type="NCBI Taxonomy" id="349161"/>
    <lineage>
        <taxon>Bacteria</taxon>
        <taxon>Bacillati</taxon>
        <taxon>Bacillota</taxon>
        <taxon>Clostridia</taxon>
        <taxon>Eubacteriales</taxon>
        <taxon>Peptococcaceae</taxon>
        <taxon>Desulforamulus</taxon>
    </lineage>
</organism>
<reference key="1">
    <citation type="submission" date="2007-03" db="EMBL/GenBank/DDBJ databases">
        <title>Complete sequence of Desulfotomaculum reducens MI-1.</title>
        <authorList>
            <consortium name="US DOE Joint Genome Institute"/>
            <person name="Copeland A."/>
            <person name="Lucas S."/>
            <person name="Lapidus A."/>
            <person name="Barry K."/>
            <person name="Detter J.C."/>
            <person name="Glavina del Rio T."/>
            <person name="Hammon N."/>
            <person name="Israni S."/>
            <person name="Dalin E."/>
            <person name="Tice H."/>
            <person name="Pitluck S."/>
            <person name="Sims D."/>
            <person name="Brettin T."/>
            <person name="Bruce D."/>
            <person name="Han C."/>
            <person name="Tapia R."/>
            <person name="Schmutz J."/>
            <person name="Larimer F."/>
            <person name="Land M."/>
            <person name="Hauser L."/>
            <person name="Kyrpides N."/>
            <person name="Kim E."/>
            <person name="Tebo B.M."/>
            <person name="Richardson P."/>
        </authorList>
    </citation>
    <scope>NUCLEOTIDE SEQUENCE [LARGE SCALE GENOMIC DNA]</scope>
    <source>
        <strain>ATCC BAA-1160 / DSM 100696 / MI-1</strain>
    </source>
</reference>
<proteinExistence type="inferred from homology"/>